<dbReference type="EMBL" id="CP001011">
    <property type="protein sequence ID" value="ACB91530.1"/>
    <property type="molecule type" value="Genomic_DNA"/>
</dbReference>
<dbReference type="RefSeq" id="WP_004087643.1">
    <property type="nucleotide sequence ID" value="NC_010577.1"/>
</dbReference>
<dbReference type="SMR" id="B2I6A6"/>
<dbReference type="GeneID" id="93903772"/>
<dbReference type="KEGG" id="xfn:XfasM23_0073"/>
<dbReference type="HOGENOM" id="CLU_100590_5_1_6"/>
<dbReference type="Proteomes" id="UP000001698">
    <property type="component" value="Chromosome"/>
</dbReference>
<dbReference type="GO" id="GO:0005737">
    <property type="term" value="C:cytoplasm"/>
    <property type="evidence" value="ECO:0007669"/>
    <property type="project" value="UniProtKB-ARBA"/>
</dbReference>
<dbReference type="GO" id="GO:0015935">
    <property type="term" value="C:small ribosomal subunit"/>
    <property type="evidence" value="ECO:0007669"/>
    <property type="project" value="TreeGrafter"/>
</dbReference>
<dbReference type="GO" id="GO:0003735">
    <property type="term" value="F:structural constituent of ribosome"/>
    <property type="evidence" value="ECO:0007669"/>
    <property type="project" value="InterPro"/>
</dbReference>
<dbReference type="GO" id="GO:0006412">
    <property type="term" value="P:translation"/>
    <property type="evidence" value="ECO:0007669"/>
    <property type="project" value="UniProtKB-UniRule"/>
</dbReference>
<dbReference type="FunFam" id="3.30.1320.10:FF:000008">
    <property type="entry name" value="30S ribosomal protein S16"/>
    <property type="match status" value="1"/>
</dbReference>
<dbReference type="Gene3D" id="3.30.1320.10">
    <property type="match status" value="1"/>
</dbReference>
<dbReference type="HAMAP" id="MF_00385">
    <property type="entry name" value="Ribosomal_bS16"/>
    <property type="match status" value="1"/>
</dbReference>
<dbReference type="InterPro" id="IPR000307">
    <property type="entry name" value="Ribosomal_bS16"/>
</dbReference>
<dbReference type="InterPro" id="IPR020592">
    <property type="entry name" value="Ribosomal_bS16_CS"/>
</dbReference>
<dbReference type="InterPro" id="IPR023803">
    <property type="entry name" value="Ribosomal_bS16_dom_sf"/>
</dbReference>
<dbReference type="NCBIfam" id="TIGR00002">
    <property type="entry name" value="S16"/>
    <property type="match status" value="1"/>
</dbReference>
<dbReference type="PANTHER" id="PTHR12919">
    <property type="entry name" value="30S RIBOSOMAL PROTEIN S16"/>
    <property type="match status" value="1"/>
</dbReference>
<dbReference type="PANTHER" id="PTHR12919:SF20">
    <property type="entry name" value="SMALL RIBOSOMAL SUBUNIT PROTEIN BS16M"/>
    <property type="match status" value="1"/>
</dbReference>
<dbReference type="Pfam" id="PF00886">
    <property type="entry name" value="Ribosomal_S16"/>
    <property type="match status" value="1"/>
</dbReference>
<dbReference type="SUPFAM" id="SSF54565">
    <property type="entry name" value="Ribosomal protein S16"/>
    <property type="match status" value="1"/>
</dbReference>
<dbReference type="PROSITE" id="PS00732">
    <property type="entry name" value="RIBOSOMAL_S16"/>
    <property type="match status" value="1"/>
</dbReference>
<name>RS16_XYLF2</name>
<reference key="1">
    <citation type="journal article" date="2010" name="J. Bacteriol.">
        <title>Whole genome sequences of two Xylella fastidiosa strains (M12 and M23) causing almond leaf scorch disease in California.</title>
        <authorList>
            <person name="Chen J."/>
            <person name="Xie G."/>
            <person name="Han S."/>
            <person name="Chertkov O."/>
            <person name="Sims D."/>
            <person name="Civerolo E.L."/>
        </authorList>
    </citation>
    <scope>NUCLEOTIDE SEQUENCE [LARGE SCALE GENOMIC DNA]</scope>
    <source>
        <strain>M23</strain>
    </source>
</reference>
<organism>
    <name type="scientific">Xylella fastidiosa (strain M23)</name>
    <dbReference type="NCBI Taxonomy" id="405441"/>
    <lineage>
        <taxon>Bacteria</taxon>
        <taxon>Pseudomonadati</taxon>
        <taxon>Pseudomonadota</taxon>
        <taxon>Gammaproteobacteria</taxon>
        <taxon>Lysobacterales</taxon>
        <taxon>Lysobacteraceae</taxon>
        <taxon>Xylella</taxon>
    </lineage>
</organism>
<protein>
    <recommendedName>
        <fullName evidence="1">Small ribosomal subunit protein bS16</fullName>
    </recommendedName>
    <alternativeName>
        <fullName evidence="2">30S ribosomal protein S16</fullName>
    </alternativeName>
</protein>
<accession>B2I6A6</accession>
<proteinExistence type="inferred from homology"/>
<evidence type="ECO:0000255" key="1">
    <source>
        <dbReference type="HAMAP-Rule" id="MF_00385"/>
    </source>
</evidence>
<evidence type="ECO:0000305" key="2"/>
<gene>
    <name evidence="1" type="primary">rpsP</name>
    <name type="ordered locus">XfasM23_0073</name>
</gene>
<sequence length="86" mass="9743">MVKIRLTRGGAKKRPFYQIIVTDSRNKRDGRNIERVGHYNPVAQGAESRVVLNMARVEHWVRNGAQLTDKVRSLLKEVSKTQATAA</sequence>
<feature type="chain" id="PRO_1000122601" description="Small ribosomal subunit protein bS16">
    <location>
        <begin position="1"/>
        <end position="86"/>
    </location>
</feature>
<comment type="similarity">
    <text evidence="1">Belongs to the bacterial ribosomal protein bS16 family.</text>
</comment>
<keyword id="KW-0687">Ribonucleoprotein</keyword>
<keyword id="KW-0689">Ribosomal protein</keyword>